<protein>
    <recommendedName>
        <fullName evidence="1">Nucleoprotein</fullName>
    </recommendedName>
    <alternativeName>
        <fullName evidence="1">Nucleocapsid protein</fullName>
        <shortName evidence="1">Protein N</shortName>
    </alternativeName>
</protein>
<name>NCAP_I97A1</name>
<organism>
    <name type="scientific">Influenza A virus (strain A/Hong Kong/156/1997 H5N1 genotype Gs/Gd)</name>
    <dbReference type="NCBI Taxonomy" id="130763"/>
    <lineage>
        <taxon>Viruses</taxon>
        <taxon>Riboviria</taxon>
        <taxon>Orthornavirae</taxon>
        <taxon>Negarnaviricota</taxon>
        <taxon>Polyploviricotina</taxon>
        <taxon>Insthoviricetes</taxon>
        <taxon>Articulavirales</taxon>
        <taxon>Orthomyxoviridae</taxon>
        <taxon>Alphainfluenzavirus</taxon>
        <taxon>Alphainfluenzavirus influenzae</taxon>
        <taxon>Influenza A virus</taxon>
    </lineage>
</organism>
<dbReference type="EMBL" id="AF028710">
    <property type="protein sequence ID" value="AAC40509.1"/>
    <property type="molecule type" value="mRNA"/>
</dbReference>
<dbReference type="EMBL" id="AF036359">
    <property type="protein sequence ID" value="AAC34267.1"/>
    <property type="molecule type" value="Genomic_RNA"/>
</dbReference>
<dbReference type="EMBL" id="AF046092">
    <property type="protein sequence ID" value="AAC32094.1"/>
    <property type="molecule type" value="Genomic_RNA"/>
</dbReference>
<dbReference type="EMBL" id="AJ291400">
    <property type="protein sequence ID" value="CAC19704.1"/>
    <property type="molecule type" value="Genomic_RNA"/>
</dbReference>
<dbReference type="SMR" id="O92784"/>
<dbReference type="PRO" id="PR:O92784"/>
<dbReference type="Proteomes" id="UP000008587">
    <property type="component" value="Genome"/>
</dbReference>
<dbReference type="GO" id="GO:0019029">
    <property type="term" value="C:helical viral capsid"/>
    <property type="evidence" value="ECO:0007669"/>
    <property type="project" value="UniProtKB-UniRule"/>
</dbReference>
<dbReference type="GO" id="GO:0043657">
    <property type="term" value="C:host cell"/>
    <property type="evidence" value="ECO:0007669"/>
    <property type="project" value="GOC"/>
</dbReference>
<dbReference type="GO" id="GO:0042025">
    <property type="term" value="C:host cell nucleus"/>
    <property type="evidence" value="ECO:0007669"/>
    <property type="project" value="UniProtKB-SubCell"/>
</dbReference>
<dbReference type="GO" id="GO:1990904">
    <property type="term" value="C:ribonucleoprotein complex"/>
    <property type="evidence" value="ECO:0007669"/>
    <property type="project" value="UniProtKB-KW"/>
</dbReference>
<dbReference type="GO" id="GO:0019013">
    <property type="term" value="C:viral nucleocapsid"/>
    <property type="evidence" value="ECO:0007669"/>
    <property type="project" value="UniProtKB-UniRule"/>
</dbReference>
<dbReference type="GO" id="GO:0003723">
    <property type="term" value="F:RNA binding"/>
    <property type="evidence" value="ECO:0007669"/>
    <property type="project" value="UniProtKB-UniRule"/>
</dbReference>
<dbReference type="GO" id="GO:0005198">
    <property type="term" value="F:structural molecule activity"/>
    <property type="evidence" value="ECO:0007669"/>
    <property type="project" value="UniProtKB-UniRule"/>
</dbReference>
<dbReference type="GO" id="GO:0046718">
    <property type="term" value="P:symbiont entry into host cell"/>
    <property type="evidence" value="ECO:0007669"/>
    <property type="project" value="UniProtKB-KW"/>
</dbReference>
<dbReference type="GO" id="GO:0075732">
    <property type="term" value="P:viral penetration into host nucleus"/>
    <property type="evidence" value="ECO:0007669"/>
    <property type="project" value="UniProtKB-UniRule"/>
</dbReference>
<dbReference type="HAMAP" id="MF_04070">
    <property type="entry name" value="INFV_NCAP"/>
    <property type="match status" value="1"/>
</dbReference>
<dbReference type="InterPro" id="IPR002141">
    <property type="entry name" value="Flu_NP"/>
</dbReference>
<dbReference type="Pfam" id="PF00506">
    <property type="entry name" value="Flu_NP"/>
    <property type="match status" value="1"/>
</dbReference>
<dbReference type="SUPFAM" id="SSF161003">
    <property type="entry name" value="flu NP-like"/>
    <property type="match status" value="1"/>
</dbReference>
<organismHost>
    <name type="scientific">Aves</name>
    <dbReference type="NCBI Taxonomy" id="8782"/>
</organismHost>
<organismHost>
    <name type="scientific">Felis catus</name>
    <name type="common">Cat</name>
    <name type="synonym">Felis silvestris catus</name>
    <dbReference type="NCBI Taxonomy" id="9685"/>
</organismHost>
<organismHost>
    <name type="scientific">Homo sapiens</name>
    <name type="common">Human</name>
    <dbReference type="NCBI Taxonomy" id="9606"/>
</organismHost>
<organismHost>
    <name type="scientific">Panthera pardus</name>
    <name type="common">Leopard</name>
    <name type="synonym">Felis pardus</name>
    <dbReference type="NCBI Taxonomy" id="9691"/>
</organismHost>
<organismHost>
    <name type="scientific">Panthera tigris</name>
    <name type="common">Tiger</name>
    <dbReference type="NCBI Taxonomy" id="9694"/>
</organismHost>
<organismHost>
    <name type="scientific">Sus scrofa</name>
    <name type="common">Pig</name>
    <dbReference type="NCBI Taxonomy" id="9823"/>
</organismHost>
<feature type="chain" id="PRO_0000079066" description="Nucleoprotein">
    <location>
        <begin position="1"/>
        <end position="498"/>
    </location>
</feature>
<feature type="region of interest" description="Disordered" evidence="2">
    <location>
        <begin position="1"/>
        <end position="21"/>
    </location>
</feature>
<feature type="short sequence motif" description="Unconventional nuclear localization signal" evidence="1">
    <location>
        <begin position="1"/>
        <end position="18"/>
    </location>
</feature>
<feature type="short sequence motif" description="Bipartite nuclear localization signal" evidence="1">
    <location>
        <begin position="198"/>
        <end position="216"/>
    </location>
</feature>
<feature type="sequence conflict" description="In Ref. 1; AAC40509." ref="1">
    <original>N</original>
    <variation>K</variation>
    <location>
        <position position="205"/>
    </location>
</feature>
<feature type="sequence conflict" description="In Ref. 4; CAC19704." ref="4">
    <original>K</original>
    <variation>R</variation>
    <location>
        <position position="236"/>
    </location>
</feature>
<feature type="sequence conflict" description="In Ref. 1, 3 and 4." ref="1 3 4">
    <original>P</original>
    <variation>L</variation>
    <location>
        <position position="283"/>
    </location>
</feature>
<feature type="sequence conflict" description="In Ref. 1; AAC40509." ref="1">
    <original>N</original>
    <variation>D</variation>
    <location>
        <position position="321"/>
    </location>
</feature>
<feature type="sequence conflict" description="In Ref. 3; AAC32094." ref="3">
    <original>P</original>
    <variation>S</variation>
    <location>
        <position position="322"/>
    </location>
</feature>
<feature type="sequence conflict" description="In Ref. 1; AAC40509." ref="1">
    <original>W</original>
    <variation>R</variation>
    <location>
        <position position="330"/>
    </location>
</feature>
<feature type="sequence conflict" description="In Ref. 1, 3 and 4." ref="1 3 4">
    <original>T</original>
    <variation>S</variation>
    <location>
        <position position="377"/>
    </location>
</feature>
<feature type="sequence conflict" description="In Ref. 1; AAC40509." ref="1">
    <original>S</original>
    <variation>F</variation>
    <location>
        <position position="402"/>
    </location>
</feature>
<feature type="sequence conflict" description="In Ref. 1; AAC40509." ref="1">
    <original>T</original>
    <variation>N</variation>
    <location>
        <position position="411"/>
    </location>
</feature>
<feature type="sequence conflict" description="In Ref. 1; AAC40509." ref="1">
    <original>L</original>
    <variation>F</variation>
    <location>
        <position position="418"/>
    </location>
</feature>
<feature type="sequence conflict" description="In Ref. 1; AAC40509." ref="1">
    <original>T</original>
    <variation>R</variation>
    <location>
        <position position="437"/>
    </location>
</feature>
<reference key="1">
    <citation type="journal article" date="1998" name="Lancet">
        <title>Human influenza A H5N1 virus related to a highly pathogenic avian influenza virus.</title>
        <authorList>
            <person name="Claas E.C.J."/>
            <person name="Osterhaus A.D."/>
            <person name="van Beek R."/>
            <person name="De Jong J.C."/>
            <person name="Rimmelzwaan G.F."/>
            <person name="Senne D.A."/>
            <person name="Krauss S."/>
            <person name="Shortridge K.F."/>
            <person name="Webster R.G."/>
        </authorList>
    </citation>
    <scope>NUCLEOTIDE SEQUENCE [MRNA]</scope>
</reference>
<reference key="2">
    <citation type="journal article" date="1998" name="Science">
        <title>Characterization of an avian influenza A (H5N1) virus isolated from a child with a fatal respiratory illness.</title>
        <authorList>
            <person name="Subbarao K."/>
            <person name="Klimov A."/>
            <person name="Katz J."/>
            <person name="Regnery H."/>
            <person name="Lim W."/>
            <person name="Hall H."/>
            <person name="Perdue M."/>
            <person name="Swayne D."/>
            <person name="Bender C."/>
            <person name="Huang J."/>
            <person name="Hemphill M."/>
            <person name="Rowe T."/>
            <person name="Shaw M."/>
            <person name="Xu X."/>
            <person name="Fukuda K."/>
            <person name="Cox N."/>
        </authorList>
    </citation>
    <scope>NUCLEOTIDE SEQUENCE [GENOMIC RNA]</scope>
</reference>
<reference key="3">
    <citation type="journal article" date="1998" name="J. Virol.">
        <title>Comparisons of highly virulent H5N1 influenza A viruses isolated from humans and chickens from Hong Kong.</title>
        <authorList>
            <person name="Suarez D.L."/>
            <person name="Perdue M.L."/>
            <person name="Cox N."/>
            <person name="Rowe T."/>
            <person name="Bender C."/>
            <person name="Huang J."/>
            <person name="Swayne D.E."/>
        </authorList>
    </citation>
    <scope>NUCLEOTIDE SEQUENCE [GENOMIC RNA]</scope>
</reference>
<reference key="4">
    <citation type="journal article" date="2000" name="Virology">
        <title>H9N2 subtype influenza A viruses in poultry in pakistan are closely related to the H9N2 viruses responsible for human infection in Hong Kong.</title>
        <authorList>
            <person name="Cameron K.R."/>
            <person name="Gregory V."/>
            <person name="Banks J."/>
            <person name="Brown I.H."/>
            <person name="Alexander D.J."/>
            <person name="Hay A.J."/>
            <person name="Lin Y.P."/>
        </authorList>
    </citation>
    <scope>NUCLEOTIDE SEQUENCE [GENOMIC RNA]</scope>
</reference>
<comment type="function">
    <text evidence="1">Encapsidates the negative strand viral RNA, protecting it from nucleases. The encapsidated genomic RNA is termed the ribonucleoprotein (RNP) and serves as template for transcription and replication. The RNP needs to be localized in the host nucleus to start an infectious cycle, but is too large to diffuse through the nuclear pore complex. NP comprises at least 2 nuclear localization signals that are responsible for the active RNP import into the nucleus through cellular importin alpha/beta pathway. Later in the infection, nclear export of RNPs are mediated through viral proteins NEP interacting with M1 which binds nucleoproteins. It is possible that nucleoprotein binds directly host exportin-1/XPO1 and plays an active role in RNPs nuclear export. M1 interaction with RNP seems to hide nucleoprotein's nuclear localization signals. Soon after a virion infects a new cell, M1 dissociates from the RNP under acidification of the virion driven by M2 protein. Dissociation of M1 from RNP unmasks nucleoprotein's nuclear localization signals, targeting the RNP to the nucleus.</text>
</comment>
<comment type="subunit">
    <text evidence="1">Homomultimerizes to form the nucleocapsid. May bind host exportin-1/XPO1. Binds to viral genomic RNA. Protein-RNA contacts are mediated by a combination of electrostatic interactions between positively charged residues and the phosphate backbone and planar interactions between aromatic side chains and bases.</text>
</comment>
<comment type="subcellular location">
    <subcellularLocation>
        <location evidence="1">Virion</location>
    </subcellularLocation>
    <subcellularLocation>
        <location evidence="1">Host nucleus</location>
    </subcellularLocation>
</comment>
<comment type="PTM">
    <text evidence="1">Late in virus-infected cells, may be cleaved from a 56-kDa protein to a 53-kDa protein by a cellular caspase. This cleavage might be a marker for the onset of apoptosis in infected cells or have a specific function in virus host interaction.</text>
</comment>
<comment type="similarity">
    <text evidence="1">Belongs to the influenza viruses nucleoprotein family.</text>
</comment>
<evidence type="ECO:0000255" key="1">
    <source>
        <dbReference type="HAMAP-Rule" id="MF_04070"/>
    </source>
</evidence>
<evidence type="ECO:0000256" key="2">
    <source>
        <dbReference type="SAM" id="MobiDB-lite"/>
    </source>
</evidence>
<accession>O92784</accession>
<accession>O89528</accession>
<accession>Q9DID1</accession>
<accession>Q9WA98</accession>
<gene>
    <name evidence="1" type="primary">NP</name>
</gene>
<sequence>MASQGTKRSYEQMETGGERQNATEIRASVGRMVGGIGRFYIQMCTELKLSDQEGRLIQNSITIERMVLSAFDERRNRYLEEHPSAGKDPKKTGGPIYRRRDGKWVRELILYDKEEIRRIWRQANNGEDATAGLTHMMIWHSNLNDATYQRTRALVRTGMDPRMCSLMQGSTLPRRSGAAGAAIKGVGTMVMELIRMIKRGINDRNFWRGENGRRTRIAYERMCNILKGKFQTAAQKAMMDQVRESRNPGNAEIEDLIFLARSALILRGSVAHKSCLPACVYGPAVASGYDFEREGYSLVGIDPFRLLQNSQVFSLIRPKENPAHKSQLVWMACHSAAFEDLRVSSFIRGTRVIPRGQLSTRGVQIASNENVEAMDSTTLELRSRYWAIRTRSGGNTNQQRASAGQISVQPTFSVQRNLPFERVTIMAAFKGNTEGRTSDMRTEIIRMMESARPEDVSFQGRGVFELSDEKATNPIVPSFDMSNEGSYFFGDNAEEYDN</sequence>
<keyword id="KW-0167">Capsid protein</keyword>
<keyword id="KW-1139">Helical capsid protein</keyword>
<keyword id="KW-1048">Host nucleus</keyword>
<keyword id="KW-0945">Host-virus interaction</keyword>
<keyword id="KW-0687">Ribonucleoprotein</keyword>
<keyword id="KW-0694">RNA-binding</keyword>
<keyword id="KW-0543">Viral nucleoprotein</keyword>
<keyword id="KW-1163">Viral penetration into host nucleus</keyword>
<keyword id="KW-0946">Virion</keyword>
<keyword id="KW-1160">Virus entry into host cell</keyword>
<proteinExistence type="evidence at transcript level"/>